<name>COPB2_MOUSE</name>
<protein>
    <recommendedName>
        <fullName>Coatomer subunit beta'</fullName>
    </recommendedName>
    <alternativeName>
        <fullName>Beta'-coat protein</fullName>
        <shortName>Beta'-COP</shortName>
    </alternativeName>
    <alternativeName>
        <fullName>p102</fullName>
    </alternativeName>
</protein>
<evidence type="ECO:0000250" key="1"/>
<evidence type="ECO:0000250" key="2">
    <source>
        <dbReference type="UniProtKB" id="P35606"/>
    </source>
</evidence>
<evidence type="ECO:0000255" key="3"/>
<evidence type="ECO:0000256" key="4">
    <source>
        <dbReference type="SAM" id="MobiDB-lite"/>
    </source>
</evidence>
<evidence type="ECO:0000269" key="5">
    <source>
    </source>
</evidence>
<evidence type="ECO:0000269" key="6">
    <source>
    </source>
</evidence>
<evidence type="ECO:0000305" key="7"/>
<gene>
    <name type="primary">Copb2</name>
</gene>
<sequence>MPLRLDIKRKLTARSDRVKSVDLHPTEPWMLASLYNGSVCVWNHETQTLVKTFEVCDLPVRAAKFVARKNWVVTGADDMQIRVFNYNTLERVHMFEAHSDYIRCIAVHPTQPFILTSSDDMLIKLWDWDKKWSCSQVFEGHTHYVMQIVINPKDNNQFASASLDRTIKVWQLGSSSPNFTLEGHEKGVNCIDYYSGGDKPYLISGADDRLVKIWDYQNKTCVQTLEGHAQNVSCASFHPELPIIITGSEDGTVRIWHSSTYRLESTLNYGMERVWCVASLRGSNNVALGYDEGSIIVKLGREEPAMSMDANGKIIWAKHSEVQQANLKAMGDTEIKDGERLPLAVKDMGSCEIYPQTIQHNPNGRFVVVCGDGEYIIYTAMALRNKSFGSAQEFAWAHDSSEYAIRESNSIVKIFKNFKEKKSFKPDFGAESIYGGFLLGVRSVNGLAFYDWENTELIRRIEIQPKHIFWSDSGELVCIATEESFFILKYLSEKVLAAQETHEGVTEDGIEDAFEVLGEIQEIVKTGLWVGDCFIYTSSVNRLNYYVGGEIVTIAHLDRTMYLLGYIPKDNRLYLGDKELNIVSYSLLVSVLEYQTAVMRRDFSMADKVLPTIPKEQRTRVAHFLEKQGFKQQALTVSTDPEHRFELALQLGELKIAYQLAVEAESEQKWKQLAELAISKCQFSLAQECLHHAQDYGGLLLLATASGNASMVNKLAEGAERDGKNNVAFMSYFLQGKLDACLELLIRTGRLPEAAFLARTYLPSQVSRVVKLWRENLSKVNQKAAESLADPTEYENLFPGLKEAFVVEEWVKETHADLWPAKQYPLVTPNEERNVMEEAKGFQPSRPTAQQEPDGKPASSPVIMASQTTHKEEKSLLELEVDLDNLELEDIDTTDINLDEDILDD</sequence>
<comment type="function">
    <text evidence="2">The coatomer is a cytosolic protein complex that binds to dilysine motifs and reversibly associates with Golgi non-clathrin-coated vesicles, which further mediate biosynthetic protein transport from the ER, via the Golgi up to the trans Golgi network. Coatomer complex is required for budding from Golgi membranes, and is essential for the retrograde Golgi-to-ER transport of dilysine-tagged proteins. In mammals, the coatomer can only be recruited by membranes associated to ADP-ribosylation factors (ARFs), which are small GTP-binding proteins; the complex also influences the Golgi structural integrity, as well as the processing, activity, and endocytic recycling of LDL receptors (By similarity).</text>
</comment>
<comment type="function">
    <text>This coatomer complex protein, essential for Golgi budding and vesicular trafficking, is a selective binding protein (RACK) for protein kinase C, epsilon type. It binds to Golgi membranes in a GTP-dependent manner.</text>
</comment>
<comment type="subunit">
    <text evidence="1 2">Oligomeric complex that consists of at least the alpha, beta, beta', gamma, delta, epsilon and zeta subunits. Probably interacts with PEX11A. Interacts with SCYL1. Interacts with JAGN1 (By similarity).</text>
</comment>
<comment type="subcellular location">
    <subcellularLocation>
        <location evidence="5">Cytoplasm</location>
        <location evidence="5">Cytosol</location>
    </subcellularLocation>
    <subcellularLocation>
        <location evidence="1">Golgi apparatus membrane</location>
        <topology evidence="1">Peripheral membrane protein</topology>
        <orientation evidence="1">Cytoplasmic side</orientation>
    </subcellularLocation>
    <subcellularLocation>
        <location evidence="1">Cytoplasmic vesicle</location>
        <location evidence="1">COPI-coated vesicle membrane</location>
        <topology evidence="1">Peripheral membrane protein</topology>
        <orientation evidence="1">Cytoplasmic side</orientation>
    </subcellularLocation>
    <text evidence="1">The coatomer is cytoplasmic or polymerized on the cytoplasmic side of the Golgi, as well as on the vesicles/buds originating from it. Shows only a slight preference for the cis-Golgi apparatus, compared with the trans-Golgi.</text>
</comment>
<comment type="disruption phenotype">
    <text evidence="6">The knockout of the gene results in early embryonic lethality with no viable embryos recovered at 12.5 dpc.</text>
</comment>
<comment type="similarity">
    <text evidence="7">Belongs to the WD repeat COPB2 family.</text>
</comment>
<proteinExistence type="evidence at protein level"/>
<keyword id="KW-0002">3D-structure</keyword>
<keyword id="KW-0007">Acetylation</keyword>
<keyword id="KW-0175">Coiled coil</keyword>
<keyword id="KW-0963">Cytoplasm</keyword>
<keyword id="KW-0968">Cytoplasmic vesicle</keyword>
<keyword id="KW-0931">ER-Golgi transport</keyword>
<keyword id="KW-0333">Golgi apparatus</keyword>
<keyword id="KW-0472">Membrane</keyword>
<keyword id="KW-0597">Phosphoprotein</keyword>
<keyword id="KW-0653">Protein transport</keyword>
<keyword id="KW-1185">Reference proteome</keyword>
<keyword id="KW-0677">Repeat</keyword>
<keyword id="KW-0813">Transport</keyword>
<keyword id="KW-0853">WD repeat</keyword>
<reference key="1">
    <citation type="journal article" date="2005" name="Science">
        <title>The transcriptional landscape of the mammalian genome.</title>
        <authorList>
            <person name="Carninci P."/>
            <person name="Kasukawa T."/>
            <person name="Katayama S."/>
            <person name="Gough J."/>
            <person name="Frith M.C."/>
            <person name="Maeda N."/>
            <person name="Oyama R."/>
            <person name="Ravasi T."/>
            <person name="Lenhard B."/>
            <person name="Wells C."/>
            <person name="Kodzius R."/>
            <person name="Shimokawa K."/>
            <person name="Bajic V.B."/>
            <person name="Brenner S.E."/>
            <person name="Batalov S."/>
            <person name="Forrest A.R."/>
            <person name="Zavolan M."/>
            <person name="Davis M.J."/>
            <person name="Wilming L.G."/>
            <person name="Aidinis V."/>
            <person name="Allen J.E."/>
            <person name="Ambesi-Impiombato A."/>
            <person name="Apweiler R."/>
            <person name="Aturaliya R.N."/>
            <person name="Bailey T.L."/>
            <person name="Bansal M."/>
            <person name="Baxter L."/>
            <person name="Beisel K.W."/>
            <person name="Bersano T."/>
            <person name="Bono H."/>
            <person name="Chalk A.M."/>
            <person name="Chiu K.P."/>
            <person name="Choudhary V."/>
            <person name="Christoffels A."/>
            <person name="Clutterbuck D.R."/>
            <person name="Crowe M.L."/>
            <person name="Dalla E."/>
            <person name="Dalrymple B.P."/>
            <person name="de Bono B."/>
            <person name="Della Gatta G."/>
            <person name="di Bernardo D."/>
            <person name="Down T."/>
            <person name="Engstrom P."/>
            <person name="Fagiolini M."/>
            <person name="Faulkner G."/>
            <person name="Fletcher C.F."/>
            <person name="Fukushima T."/>
            <person name="Furuno M."/>
            <person name="Futaki S."/>
            <person name="Gariboldi M."/>
            <person name="Georgii-Hemming P."/>
            <person name="Gingeras T.R."/>
            <person name="Gojobori T."/>
            <person name="Green R.E."/>
            <person name="Gustincich S."/>
            <person name="Harbers M."/>
            <person name="Hayashi Y."/>
            <person name="Hensch T.K."/>
            <person name="Hirokawa N."/>
            <person name="Hill D."/>
            <person name="Huminiecki L."/>
            <person name="Iacono M."/>
            <person name="Ikeo K."/>
            <person name="Iwama A."/>
            <person name="Ishikawa T."/>
            <person name="Jakt M."/>
            <person name="Kanapin A."/>
            <person name="Katoh M."/>
            <person name="Kawasawa Y."/>
            <person name="Kelso J."/>
            <person name="Kitamura H."/>
            <person name="Kitano H."/>
            <person name="Kollias G."/>
            <person name="Krishnan S.P."/>
            <person name="Kruger A."/>
            <person name="Kummerfeld S.K."/>
            <person name="Kurochkin I.V."/>
            <person name="Lareau L.F."/>
            <person name="Lazarevic D."/>
            <person name="Lipovich L."/>
            <person name="Liu J."/>
            <person name="Liuni S."/>
            <person name="McWilliam S."/>
            <person name="Madan Babu M."/>
            <person name="Madera M."/>
            <person name="Marchionni L."/>
            <person name="Matsuda H."/>
            <person name="Matsuzawa S."/>
            <person name="Miki H."/>
            <person name="Mignone F."/>
            <person name="Miyake S."/>
            <person name="Morris K."/>
            <person name="Mottagui-Tabar S."/>
            <person name="Mulder N."/>
            <person name="Nakano N."/>
            <person name="Nakauchi H."/>
            <person name="Ng P."/>
            <person name="Nilsson R."/>
            <person name="Nishiguchi S."/>
            <person name="Nishikawa S."/>
            <person name="Nori F."/>
            <person name="Ohara O."/>
            <person name="Okazaki Y."/>
            <person name="Orlando V."/>
            <person name="Pang K.C."/>
            <person name="Pavan W.J."/>
            <person name="Pavesi G."/>
            <person name="Pesole G."/>
            <person name="Petrovsky N."/>
            <person name="Piazza S."/>
            <person name="Reed J."/>
            <person name="Reid J.F."/>
            <person name="Ring B.Z."/>
            <person name="Ringwald M."/>
            <person name="Rost B."/>
            <person name="Ruan Y."/>
            <person name="Salzberg S.L."/>
            <person name="Sandelin A."/>
            <person name="Schneider C."/>
            <person name="Schoenbach C."/>
            <person name="Sekiguchi K."/>
            <person name="Semple C.A."/>
            <person name="Seno S."/>
            <person name="Sessa L."/>
            <person name="Sheng Y."/>
            <person name="Shibata Y."/>
            <person name="Shimada H."/>
            <person name="Shimada K."/>
            <person name="Silva D."/>
            <person name="Sinclair B."/>
            <person name="Sperling S."/>
            <person name="Stupka E."/>
            <person name="Sugiura K."/>
            <person name="Sultana R."/>
            <person name="Takenaka Y."/>
            <person name="Taki K."/>
            <person name="Tammoja K."/>
            <person name="Tan S.L."/>
            <person name="Tang S."/>
            <person name="Taylor M.S."/>
            <person name="Tegner J."/>
            <person name="Teichmann S.A."/>
            <person name="Ueda H.R."/>
            <person name="van Nimwegen E."/>
            <person name="Verardo R."/>
            <person name="Wei C.L."/>
            <person name="Yagi K."/>
            <person name="Yamanishi H."/>
            <person name="Zabarovsky E."/>
            <person name="Zhu S."/>
            <person name="Zimmer A."/>
            <person name="Hide W."/>
            <person name="Bult C."/>
            <person name="Grimmond S.M."/>
            <person name="Teasdale R.D."/>
            <person name="Liu E.T."/>
            <person name="Brusic V."/>
            <person name="Quackenbush J."/>
            <person name="Wahlestedt C."/>
            <person name="Mattick J.S."/>
            <person name="Hume D.A."/>
            <person name="Kai C."/>
            <person name="Sasaki D."/>
            <person name="Tomaru Y."/>
            <person name="Fukuda S."/>
            <person name="Kanamori-Katayama M."/>
            <person name="Suzuki M."/>
            <person name="Aoki J."/>
            <person name="Arakawa T."/>
            <person name="Iida J."/>
            <person name="Imamura K."/>
            <person name="Itoh M."/>
            <person name="Kato T."/>
            <person name="Kawaji H."/>
            <person name="Kawagashira N."/>
            <person name="Kawashima T."/>
            <person name="Kojima M."/>
            <person name="Kondo S."/>
            <person name="Konno H."/>
            <person name="Nakano K."/>
            <person name="Ninomiya N."/>
            <person name="Nishio T."/>
            <person name="Okada M."/>
            <person name="Plessy C."/>
            <person name="Shibata K."/>
            <person name="Shiraki T."/>
            <person name="Suzuki S."/>
            <person name="Tagami M."/>
            <person name="Waki K."/>
            <person name="Watahiki A."/>
            <person name="Okamura-Oho Y."/>
            <person name="Suzuki H."/>
            <person name="Kawai J."/>
            <person name="Hayashizaki Y."/>
        </authorList>
    </citation>
    <scope>NUCLEOTIDE SEQUENCE [LARGE SCALE MRNA]</scope>
    <source>
        <strain>C57BL/6J</strain>
        <strain>NOD</strain>
        <tissue>Bone marrow</tissue>
        <tissue>Thymus</tissue>
    </source>
</reference>
<reference key="2">
    <citation type="journal article" date="2004" name="Genome Res.">
        <title>The status, quality, and expansion of the NIH full-length cDNA project: the Mammalian Gene Collection (MGC).</title>
        <authorList>
            <consortium name="The MGC Project Team"/>
        </authorList>
    </citation>
    <scope>NUCLEOTIDE SEQUENCE [LARGE SCALE MRNA]</scope>
</reference>
<reference key="3">
    <citation type="submission" date="1998-01" db="EMBL/GenBank/DDBJ databases">
        <authorList>
            <person name="Tarsounas M."/>
            <person name="Moens P.B."/>
            <person name="Pearlman R.E."/>
        </authorList>
    </citation>
    <scope>NUCLEOTIDE SEQUENCE [MRNA] OF 456-905</scope>
    <source>
        <tissue>Testis</tissue>
    </source>
</reference>
<reference key="4">
    <citation type="journal article" date="2007" name="Proc. Natl. Acad. Sci. U.S.A.">
        <title>Differential localization of coatomer complex isoforms within the Golgi apparatus.</title>
        <authorList>
            <person name="Moelleken J."/>
            <person name="Malsam J."/>
            <person name="Betts M.J."/>
            <person name="Movafeghi A."/>
            <person name="Reckmann I."/>
            <person name="Meissner I."/>
            <person name="Hellwig A."/>
            <person name="Russell R.B."/>
            <person name="Sollner T."/>
            <person name="Brugger B."/>
            <person name="Wieland F.T."/>
        </authorList>
    </citation>
    <scope>SUBCELLULAR LOCATION</scope>
</reference>
<reference key="5">
    <citation type="journal article" date="2010" name="Cell">
        <title>A tissue-specific atlas of mouse protein phosphorylation and expression.</title>
        <authorList>
            <person name="Huttlin E.L."/>
            <person name="Jedrychowski M.P."/>
            <person name="Elias J.E."/>
            <person name="Goswami T."/>
            <person name="Rad R."/>
            <person name="Beausoleil S.A."/>
            <person name="Villen J."/>
            <person name="Haas W."/>
            <person name="Sowa M.E."/>
            <person name="Gygi S.P."/>
        </authorList>
    </citation>
    <scope>IDENTIFICATION BY MASS SPECTROMETRY [LARGE SCALE ANALYSIS]</scope>
    <source>
        <tissue>Brain</tissue>
        <tissue>Brown adipose tissue</tissue>
        <tissue>Heart</tissue>
        <tissue>Kidney</tissue>
        <tissue>Liver</tissue>
        <tissue>Lung</tissue>
        <tissue>Pancreas</tissue>
        <tissue>Spleen</tissue>
        <tissue>Testis</tissue>
    </source>
</reference>
<reference key="6">
    <citation type="journal article" date="2017" name="Hum. Mol. Genet.">
        <title>Copb2 is essential for embryogenesis and hypomorphic mutations cause human microcephaly.</title>
        <authorList>
            <person name="DiStasio A."/>
            <person name="Driver A."/>
            <person name="Sund K."/>
            <person name="Donlin M."/>
            <person name="Muraleedharan R.M."/>
            <person name="Pooya S."/>
            <person name="Kline-Fath B."/>
            <person name="Kaufman K.M."/>
            <person name="Prows C.A."/>
            <person name="Schorry E."/>
            <person name="Dasgupta B."/>
            <person name="Stottmann R.W."/>
        </authorList>
    </citation>
    <scope>DISRUPTION PHENOTYPE</scope>
    <scope>MUTAGENESIS OF ARG-254</scope>
</reference>
<accession>O55029</accession>
<accession>Q3U5Z9</accession>
<organism>
    <name type="scientific">Mus musculus</name>
    <name type="common">Mouse</name>
    <dbReference type="NCBI Taxonomy" id="10090"/>
    <lineage>
        <taxon>Eukaryota</taxon>
        <taxon>Metazoa</taxon>
        <taxon>Chordata</taxon>
        <taxon>Craniata</taxon>
        <taxon>Vertebrata</taxon>
        <taxon>Euteleostomi</taxon>
        <taxon>Mammalia</taxon>
        <taxon>Eutheria</taxon>
        <taxon>Euarchontoglires</taxon>
        <taxon>Glires</taxon>
        <taxon>Rodentia</taxon>
        <taxon>Myomorpha</taxon>
        <taxon>Muroidea</taxon>
        <taxon>Muridae</taxon>
        <taxon>Murinae</taxon>
        <taxon>Mus</taxon>
        <taxon>Mus</taxon>
    </lineage>
</organism>
<dbReference type="EMBL" id="AK088064">
    <property type="protein sequence ID" value="BAC40125.1"/>
    <property type="molecule type" value="mRNA"/>
</dbReference>
<dbReference type="EMBL" id="AK153352">
    <property type="protein sequence ID" value="BAE31926.1"/>
    <property type="molecule type" value="mRNA"/>
</dbReference>
<dbReference type="EMBL" id="AF043120">
    <property type="protein sequence ID" value="AAB97760.1"/>
    <property type="molecule type" value="mRNA"/>
</dbReference>
<dbReference type="EMBL" id="BC006675">
    <property type="protein sequence ID" value="AAH06675.1"/>
    <property type="molecule type" value="mRNA"/>
</dbReference>
<dbReference type="CCDS" id="CCDS40734.1"/>
<dbReference type="RefSeq" id="NP_056642.1">
    <property type="nucleotide sequence ID" value="NM_015827.2"/>
</dbReference>
<dbReference type="PDB" id="5A1U">
    <property type="method" value="EM"/>
    <property type="resolution" value="13.00 A"/>
    <property type="chains" value="D=1-905"/>
</dbReference>
<dbReference type="PDB" id="5A1V">
    <property type="method" value="EM"/>
    <property type="resolution" value="21.00 A"/>
    <property type="chains" value="D/L/U=1-905"/>
</dbReference>
<dbReference type="PDB" id="5A1W">
    <property type="method" value="EM"/>
    <property type="resolution" value="18.00 A"/>
    <property type="chains" value="D=1-905"/>
</dbReference>
<dbReference type="PDB" id="5A1X">
    <property type="method" value="EM"/>
    <property type="resolution" value="23.00 A"/>
    <property type="chains" value="D/L=1-905"/>
</dbReference>
<dbReference type="PDB" id="5A1Y">
    <property type="method" value="EM"/>
    <property type="resolution" value="21.00 A"/>
    <property type="chains" value="D/L=1-905"/>
</dbReference>
<dbReference type="PDB" id="5NZR">
    <property type="method" value="EM"/>
    <property type="resolution" value="9.20 A"/>
    <property type="chains" value="C=1-905"/>
</dbReference>
<dbReference type="PDB" id="5NZS">
    <property type="method" value="EM"/>
    <property type="resolution" value="10.10 A"/>
    <property type="chains" value="C=1-905"/>
</dbReference>
<dbReference type="PDB" id="5NZT">
    <property type="method" value="EM"/>
    <property type="resolution" value="17.00 A"/>
    <property type="chains" value="C/H=1-905"/>
</dbReference>
<dbReference type="PDB" id="5NZU">
    <property type="method" value="EM"/>
    <property type="resolution" value="15.00 A"/>
    <property type="chains" value="C=1-905"/>
</dbReference>
<dbReference type="PDB" id="5NZV">
    <property type="method" value="EM"/>
    <property type="resolution" value="17.30 A"/>
    <property type="chains" value="C/J=1-905"/>
</dbReference>
<dbReference type="PDBsum" id="5A1U"/>
<dbReference type="PDBsum" id="5A1V"/>
<dbReference type="PDBsum" id="5A1W"/>
<dbReference type="PDBsum" id="5A1X"/>
<dbReference type="PDBsum" id="5A1Y"/>
<dbReference type="PDBsum" id="5NZR"/>
<dbReference type="PDBsum" id="5NZS"/>
<dbReference type="PDBsum" id="5NZT"/>
<dbReference type="PDBsum" id="5NZU"/>
<dbReference type="PDBsum" id="5NZV"/>
<dbReference type="EMDB" id="EMD-3720"/>
<dbReference type="EMDB" id="EMD-3721"/>
<dbReference type="EMDB" id="EMD-3722"/>
<dbReference type="EMDB" id="EMD-3723"/>
<dbReference type="EMDB" id="EMD-3724"/>
<dbReference type="SMR" id="O55029"/>
<dbReference type="BioGRID" id="206128">
    <property type="interactions" value="30"/>
</dbReference>
<dbReference type="FunCoup" id="O55029">
    <property type="interactions" value="3073"/>
</dbReference>
<dbReference type="IntAct" id="O55029">
    <property type="interactions" value="4"/>
</dbReference>
<dbReference type="MINT" id="O55029"/>
<dbReference type="STRING" id="10090.ENSMUSP00000035033"/>
<dbReference type="GlyGen" id="O55029">
    <property type="glycosylation" value="1 site, 1 O-linked glycan (1 site)"/>
</dbReference>
<dbReference type="iPTMnet" id="O55029"/>
<dbReference type="MetOSite" id="O55029"/>
<dbReference type="PhosphoSitePlus" id="O55029"/>
<dbReference type="SwissPalm" id="O55029"/>
<dbReference type="jPOST" id="O55029"/>
<dbReference type="PaxDb" id="10090-ENSMUSP00000035033"/>
<dbReference type="PeptideAtlas" id="O55029"/>
<dbReference type="ProteomicsDB" id="284083"/>
<dbReference type="Pumba" id="O55029"/>
<dbReference type="Antibodypedia" id="33460">
    <property type="antibodies" value="128 antibodies from 25 providers"/>
</dbReference>
<dbReference type="DNASU" id="50797"/>
<dbReference type="Ensembl" id="ENSMUST00000035033.7">
    <property type="protein sequence ID" value="ENSMUSP00000035033.6"/>
    <property type="gene ID" value="ENSMUSG00000032458.7"/>
</dbReference>
<dbReference type="GeneID" id="50797"/>
<dbReference type="KEGG" id="mmu:50797"/>
<dbReference type="UCSC" id="uc009rdm.1">
    <property type="organism name" value="mouse"/>
</dbReference>
<dbReference type="AGR" id="MGI:1354962"/>
<dbReference type="CTD" id="9276"/>
<dbReference type="MGI" id="MGI:1354962">
    <property type="gene designation" value="Copb2"/>
</dbReference>
<dbReference type="VEuPathDB" id="HostDB:ENSMUSG00000032458"/>
<dbReference type="eggNOG" id="KOG0276">
    <property type="taxonomic scope" value="Eukaryota"/>
</dbReference>
<dbReference type="GeneTree" id="ENSGT00900000141083"/>
<dbReference type="HOGENOM" id="CLU_005507_1_0_1"/>
<dbReference type="InParanoid" id="O55029"/>
<dbReference type="OMA" id="YVDYYPQ"/>
<dbReference type="OrthoDB" id="2150324at2759"/>
<dbReference type="PhylomeDB" id="O55029"/>
<dbReference type="TreeFam" id="TF300688"/>
<dbReference type="Reactome" id="R-MMU-6807878">
    <property type="pathway name" value="COPI-mediated anterograde transport"/>
</dbReference>
<dbReference type="Reactome" id="R-MMU-6811434">
    <property type="pathway name" value="COPI-dependent Golgi-to-ER retrograde traffic"/>
</dbReference>
<dbReference type="BioGRID-ORCS" id="50797">
    <property type="hits" value="25 hits in 76 CRISPR screens"/>
</dbReference>
<dbReference type="ChiTaRS" id="Copb2">
    <property type="organism name" value="mouse"/>
</dbReference>
<dbReference type="EvolutionaryTrace" id="O55029"/>
<dbReference type="PRO" id="PR:O55029"/>
<dbReference type="Proteomes" id="UP000000589">
    <property type="component" value="Chromosome 9"/>
</dbReference>
<dbReference type="RNAct" id="O55029">
    <property type="molecule type" value="protein"/>
</dbReference>
<dbReference type="Bgee" id="ENSMUSG00000032458">
    <property type="expression patterns" value="Expressed in ascending aorta and 285 other cell types or tissues"/>
</dbReference>
<dbReference type="GO" id="GO:0030126">
    <property type="term" value="C:COPI vesicle coat"/>
    <property type="evidence" value="ECO:0000266"/>
    <property type="project" value="MGI"/>
</dbReference>
<dbReference type="GO" id="GO:0005829">
    <property type="term" value="C:cytosol"/>
    <property type="evidence" value="ECO:0007669"/>
    <property type="project" value="UniProtKB-SubCell"/>
</dbReference>
<dbReference type="GO" id="GO:0005794">
    <property type="term" value="C:Golgi apparatus"/>
    <property type="evidence" value="ECO:0000314"/>
    <property type="project" value="MGI"/>
</dbReference>
<dbReference type="GO" id="GO:0000139">
    <property type="term" value="C:Golgi membrane"/>
    <property type="evidence" value="ECO:0007669"/>
    <property type="project" value="UniProtKB-SubCell"/>
</dbReference>
<dbReference type="GO" id="GO:0005198">
    <property type="term" value="F:structural molecule activity"/>
    <property type="evidence" value="ECO:0007669"/>
    <property type="project" value="InterPro"/>
</dbReference>
<dbReference type="GO" id="GO:0006891">
    <property type="term" value="P:intra-Golgi vesicle-mediated transport"/>
    <property type="evidence" value="ECO:0007669"/>
    <property type="project" value="Ensembl"/>
</dbReference>
<dbReference type="GO" id="GO:0006886">
    <property type="term" value="P:intracellular protein transport"/>
    <property type="evidence" value="ECO:0007669"/>
    <property type="project" value="InterPro"/>
</dbReference>
<dbReference type="GO" id="GO:0006890">
    <property type="term" value="P:retrograde vesicle-mediated transport, Golgi to endoplasmic reticulum"/>
    <property type="evidence" value="ECO:0000250"/>
    <property type="project" value="UniProtKB"/>
</dbReference>
<dbReference type="CDD" id="cd22947">
    <property type="entry name" value="Coatomer_WDAD_beta-like"/>
    <property type="match status" value="1"/>
</dbReference>
<dbReference type="CDD" id="cd00200">
    <property type="entry name" value="WD40"/>
    <property type="match status" value="1"/>
</dbReference>
<dbReference type="FunFam" id="1.25.40.470:FF:000001">
    <property type="entry name" value="Coatomer subunit beta"/>
    <property type="match status" value="1"/>
</dbReference>
<dbReference type="FunFam" id="2.130.10.10:FF:000008">
    <property type="entry name" value="Coatomer subunit beta"/>
    <property type="match status" value="1"/>
</dbReference>
<dbReference type="Gene3D" id="1.25.40.470">
    <property type="match status" value="1"/>
</dbReference>
<dbReference type="Gene3D" id="2.130.10.10">
    <property type="entry name" value="YVTN repeat-like/Quinoprotein amine dehydrogenase"/>
    <property type="match status" value="1"/>
</dbReference>
<dbReference type="InterPro" id="IPR006692">
    <property type="entry name" value="Beta-prop_COPA/B_2nd"/>
</dbReference>
<dbReference type="InterPro" id="IPR050844">
    <property type="entry name" value="Coatomer_complex_subunit"/>
</dbReference>
<dbReference type="InterPro" id="IPR016453">
    <property type="entry name" value="COPB2"/>
</dbReference>
<dbReference type="InterPro" id="IPR020472">
    <property type="entry name" value="G-protein_beta_WD-40_rep"/>
</dbReference>
<dbReference type="InterPro" id="IPR056176">
    <property type="entry name" value="TPR_COPA_B"/>
</dbReference>
<dbReference type="InterPro" id="IPR015943">
    <property type="entry name" value="WD40/YVTN_repeat-like_dom_sf"/>
</dbReference>
<dbReference type="InterPro" id="IPR036322">
    <property type="entry name" value="WD40_repeat_dom_sf"/>
</dbReference>
<dbReference type="InterPro" id="IPR001680">
    <property type="entry name" value="WD40_rpt"/>
</dbReference>
<dbReference type="PANTHER" id="PTHR19876">
    <property type="entry name" value="COATOMER"/>
    <property type="match status" value="1"/>
</dbReference>
<dbReference type="PANTHER" id="PTHR19876:SF2">
    <property type="entry name" value="COATOMER SUBUNIT BETA"/>
    <property type="match status" value="1"/>
</dbReference>
<dbReference type="Pfam" id="PF04053">
    <property type="entry name" value="B-prop_COPA_B_2nd"/>
    <property type="match status" value="1"/>
</dbReference>
<dbReference type="Pfam" id="PF23953">
    <property type="entry name" value="TPR_COPA_B"/>
    <property type="match status" value="1"/>
</dbReference>
<dbReference type="Pfam" id="PF00400">
    <property type="entry name" value="WD40"/>
    <property type="match status" value="6"/>
</dbReference>
<dbReference type="PIRSF" id="PIRSF005567">
    <property type="entry name" value="Coatomer_beta'_subunit"/>
    <property type="match status" value="1"/>
</dbReference>
<dbReference type="PRINTS" id="PR00320">
    <property type="entry name" value="GPROTEINBRPT"/>
</dbReference>
<dbReference type="SMART" id="SM00320">
    <property type="entry name" value="WD40"/>
    <property type="match status" value="6"/>
</dbReference>
<dbReference type="SUPFAM" id="SSF50978">
    <property type="entry name" value="WD40 repeat-like"/>
    <property type="match status" value="2"/>
</dbReference>
<dbReference type="PROSITE" id="PS50082">
    <property type="entry name" value="WD_REPEATS_2"/>
    <property type="match status" value="5"/>
</dbReference>
<dbReference type="PROSITE" id="PS50294">
    <property type="entry name" value="WD_REPEATS_REGION"/>
    <property type="match status" value="1"/>
</dbReference>
<feature type="chain" id="PRO_0000050913" description="Coatomer subunit beta'">
    <location>
        <begin position="1"/>
        <end position="905"/>
    </location>
</feature>
<feature type="repeat" description="WD 1">
    <location>
        <begin position="13"/>
        <end position="52"/>
    </location>
</feature>
<feature type="repeat" description="WD 2">
    <location>
        <begin position="55"/>
        <end position="94"/>
    </location>
</feature>
<feature type="repeat" description="WD 3">
    <location>
        <begin position="97"/>
        <end position="136"/>
    </location>
</feature>
<feature type="repeat" description="WD 4">
    <location>
        <begin position="140"/>
        <end position="180"/>
    </location>
</feature>
<feature type="repeat" description="WD 5">
    <location>
        <begin position="183"/>
        <end position="224"/>
    </location>
</feature>
<feature type="repeat" description="WD 6">
    <location>
        <begin position="227"/>
        <end position="266"/>
    </location>
</feature>
<feature type="repeat" description="WD 7">
    <location>
        <begin position="350"/>
        <end position="388"/>
    </location>
</feature>
<feature type="repeat" description="WD 8">
    <location>
        <begin position="390"/>
        <end position="425"/>
    </location>
</feature>
<feature type="repeat" description="WD 9">
    <location>
        <begin position="746"/>
        <end position="783"/>
    </location>
</feature>
<feature type="region of interest" description="Disordered" evidence="4">
    <location>
        <begin position="837"/>
        <end position="873"/>
    </location>
</feature>
<feature type="coiled-coil region" evidence="3">
    <location>
        <begin position="867"/>
        <end position="891"/>
    </location>
</feature>
<feature type="modified residue" description="N6-acetyllysine" evidence="2">
    <location>
        <position position="627"/>
    </location>
</feature>
<feature type="modified residue" description="Phosphoserine" evidence="2">
    <location>
        <position position="859"/>
    </location>
</feature>
<feature type="mutagenesis site" description="No effect on protein abundance. Mice homozygous for that mutation do not display any developmental abnormality." evidence="6">
    <original>R</original>
    <variation>C</variation>
    <location>
        <position position="254"/>
    </location>
</feature>
<feature type="sequence conflict" description="In Ref. 3; AAB97760." evidence="7" ref="3">
    <original>S</original>
    <variation>H</variation>
    <location>
        <position position="684"/>
    </location>
</feature>
<feature type="sequence conflict" description="In Ref. 3; AAB97760." evidence="7" ref="3">
    <original>F</original>
    <variation>L</variation>
    <location>
        <position position="733"/>
    </location>
</feature>
<feature type="sequence conflict" description="In Ref. 3; AAB97760." evidence="7" ref="3">
    <original>A</original>
    <variation>P</variation>
    <location>
        <position position="839"/>
    </location>
</feature>